<name>YD39_SCHPO</name>
<proteinExistence type="predicted"/>
<evidence type="ECO:0000256" key="1">
    <source>
        <dbReference type="SAM" id="MobiDB-lite"/>
    </source>
</evidence>
<keyword id="KW-1185">Reference proteome</keyword>
<dbReference type="EMBL" id="CU329670">
    <property type="protein sequence ID" value="CAA93597.1"/>
    <property type="molecule type" value="Genomic_DNA"/>
</dbReference>
<dbReference type="PIR" id="S67438">
    <property type="entry name" value="S67438"/>
</dbReference>
<dbReference type="RefSeq" id="NP_593711.1">
    <property type="nucleotide sequence ID" value="NM_001019142.2"/>
</dbReference>
<dbReference type="SMR" id="Q10273"/>
<dbReference type="BioGRID" id="279298">
    <property type="interactions" value="1"/>
</dbReference>
<dbReference type="SwissPalm" id="Q10273"/>
<dbReference type="PaxDb" id="4896-SPAC13G7.09c.1"/>
<dbReference type="EnsemblFungi" id="SPAC13G7.09c.1">
    <property type="protein sequence ID" value="SPAC13G7.09c.1:pep"/>
    <property type="gene ID" value="SPAC13G7.09c"/>
</dbReference>
<dbReference type="KEGG" id="spo:2542852"/>
<dbReference type="PomBase" id="SPAC13G7.09c"/>
<dbReference type="VEuPathDB" id="FungiDB:SPAC13G7.09c"/>
<dbReference type="HOGENOM" id="CLU_1807328_0_0_1"/>
<dbReference type="InParanoid" id="Q10273"/>
<dbReference type="OMA" id="LRPNTNF"/>
<dbReference type="PRO" id="PR:Q10273"/>
<dbReference type="Proteomes" id="UP000002485">
    <property type="component" value="Chromosome I"/>
</dbReference>
<dbReference type="GO" id="GO:0005730">
    <property type="term" value="C:nucleolus"/>
    <property type="evidence" value="ECO:0007005"/>
    <property type="project" value="PomBase"/>
</dbReference>
<dbReference type="GO" id="GO:0005634">
    <property type="term" value="C:nucleus"/>
    <property type="evidence" value="ECO:0007005"/>
    <property type="project" value="PomBase"/>
</dbReference>
<accession>Q10273</accession>
<feature type="chain" id="PRO_0000116576" description="Uncharacterized protein C13G7.09c">
    <location>
        <begin position="1"/>
        <end position="135"/>
    </location>
</feature>
<feature type="region of interest" description="Disordered" evidence="1">
    <location>
        <begin position="56"/>
        <end position="135"/>
    </location>
</feature>
<feature type="compositionally biased region" description="Basic residues" evidence="1">
    <location>
        <begin position="64"/>
        <end position="74"/>
    </location>
</feature>
<feature type="compositionally biased region" description="Polar residues" evidence="1">
    <location>
        <begin position="77"/>
        <end position="89"/>
    </location>
</feature>
<feature type="compositionally biased region" description="Basic and acidic residues" evidence="1">
    <location>
        <begin position="108"/>
        <end position="135"/>
    </location>
</feature>
<gene>
    <name type="ORF">SPAC13G7.09c</name>
</gene>
<reference key="1">
    <citation type="journal article" date="2002" name="Nature">
        <title>The genome sequence of Schizosaccharomyces pombe.</title>
        <authorList>
            <person name="Wood V."/>
            <person name="Gwilliam R."/>
            <person name="Rajandream M.A."/>
            <person name="Lyne M.H."/>
            <person name="Lyne R."/>
            <person name="Stewart A."/>
            <person name="Sgouros J.G."/>
            <person name="Peat N."/>
            <person name="Hayles J."/>
            <person name="Baker S.G."/>
            <person name="Basham D."/>
            <person name="Bowman S."/>
            <person name="Brooks K."/>
            <person name="Brown D."/>
            <person name="Brown S."/>
            <person name="Chillingworth T."/>
            <person name="Churcher C.M."/>
            <person name="Collins M."/>
            <person name="Connor R."/>
            <person name="Cronin A."/>
            <person name="Davis P."/>
            <person name="Feltwell T."/>
            <person name="Fraser A."/>
            <person name="Gentles S."/>
            <person name="Goble A."/>
            <person name="Hamlin N."/>
            <person name="Harris D.E."/>
            <person name="Hidalgo J."/>
            <person name="Hodgson G."/>
            <person name="Holroyd S."/>
            <person name="Hornsby T."/>
            <person name="Howarth S."/>
            <person name="Huckle E.J."/>
            <person name="Hunt S."/>
            <person name="Jagels K."/>
            <person name="James K.D."/>
            <person name="Jones L."/>
            <person name="Jones M."/>
            <person name="Leather S."/>
            <person name="McDonald S."/>
            <person name="McLean J."/>
            <person name="Mooney P."/>
            <person name="Moule S."/>
            <person name="Mungall K.L."/>
            <person name="Murphy L.D."/>
            <person name="Niblett D."/>
            <person name="Odell C."/>
            <person name="Oliver K."/>
            <person name="O'Neil S."/>
            <person name="Pearson D."/>
            <person name="Quail M.A."/>
            <person name="Rabbinowitsch E."/>
            <person name="Rutherford K.M."/>
            <person name="Rutter S."/>
            <person name="Saunders D."/>
            <person name="Seeger K."/>
            <person name="Sharp S."/>
            <person name="Skelton J."/>
            <person name="Simmonds M.N."/>
            <person name="Squares R."/>
            <person name="Squares S."/>
            <person name="Stevens K."/>
            <person name="Taylor K."/>
            <person name="Taylor R.G."/>
            <person name="Tivey A."/>
            <person name="Walsh S.V."/>
            <person name="Warren T."/>
            <person name="Whitehead S."/>
            <person name="Woodward J.R."/>
            <person name="Volckaert G."/>
            <person name="Aert R."/>
            <person name="Robben J."/>
            <person name="Grymonprez B."/>
            <person name="Weltjens I."/>
            <person name="Vanstreels E."/>
            <person name="Rieger M."/>
            <person name="Schaefer M."/>
            <person name="Mueller-Auer S."/>
            <person name="Gabel C."/>
            <person name="Fuchs M."/>
            <person name="Duesterhoeft A."/>
            <person name="Fritzc C."/>
            <person name="Holzer E."/>
            <person name="Moestl D."/>
            <person name="Hilbert H."/>
            <person name="Borzym K."/>
            <person name="Langer I."/>
            <person name="Beck A."/>
            <person name="Lehrach H."/>
            <person name="Reinhardt R."/>
            <person name="Pohl T.M."/>
            <person name="Eger P."/>
            <person name="Zimmermann W."/>
            <person name="Wedler H."/>
            <person name="Wambutt R."/>
            <person name="Purnelle B."/>
            <person name="Goffeau A."/>
            <person name="Cadieu E."/>
            <person name="Dreano S."/>
            <person name="Gloux S."/>
            <person name="Lelaure V."/>
            <person name="Mottier S."/>
            <person name="Galibert F."/>
            <person name="Aves S.J."/>
            <person name="Xiang Z."/>
            <person name="Hunt C."/>
            <person name="Moore K."/>
            <person name="Hurst S.M."/>
            <person name="Lucas M."/>
            <person name="Rochet M."/>
            <person name="Gaillardin C."/>
            <person name="Tallada V.A."/>
            <person name="Garzon A."/>
            <person name="Thode G."/>
            <person name="Daga R.R."/>
            <person name="Cruzado L."/>
            <person name="Jimenez J."/>
            <person name="Sanchez M."/>
            <person name="del Rey F."/>
            <person name="Benito J."/>
            <person name="Dominguez A."/>
            <person name="Revuelta J.L."/>
            <person name="Moreno S."/>
            <person name="Armstrong J."/>
            <person name="Forsburg S.L."/>
            <person name="Cerutti L."/>
            <person name="Lowe T."/>
            <person name="McCombie W.R."/>
            <person name="Paulsen I."/>
            <person name="Potashkin J."/>
            <person name="Shpakovski G.V."/>
            <person name="Ussery D."/>
            <person name="Barrell B.G."/>
            <person name="Nurse P."/>
        </authorList>
    </citation>
    <scope>NUCLEOTIDE SEQUENCE [LARGE SCALE GENOMIC DNA]</scope>
    <source>
        <strain>972 / ATCC 24843</strain>
    </source>
</reference>
<organism>
    <name type="scientific">Schizosaccharomyces pombe (strain 972 / ATCC 24843)</name>
    <name type="common">Fission yeast</name>
    <dbReference type="NCBI Taxonomy" id="284812"/>
    <lineage>
        <taxon>Eukaryota</taxon>
        <taxon>Fungi</taxon>
        <taxon>Dikarya</taxon>
        <taxon>Ascomycota</taxon>
        <taxon>Taphrinomycotina</taxon>
        <taxon>Schizosaccharomycetes</taxon>
        <taxon>Schizosaccharomycetales</taxon>
        <taxon>Schizosaccharomycetaceae</taxon>
        <taxon>Schizosaccharomyces</taxon>
    </lineage>
</organism>
<protein>
    <recommendedName>
        <fullName>Uncharacterized protein C13G7.09c</fullName>
    </recommendedName>
</protein>
<sequence>MESSLDRLNFDEFVAKLLIHESKKKNKSFVDHGYIEKEKTKLRPNKVFLNNMVRNVQSHNRGINNRRRDQKRKQLISIKQDNDLNVSSERLSRRIDVPRPTSKKKRLYKETPDLDEPGSREKRVSQKGQLKIEKV</sequence>